<comment type="function">
    <text evidence="1">Catalyzes the sequential NAD-dependent oxidations of L-histidinol to L-histidinaldehyde and then to L-histidine.</text>
</comment>
<comment type="catalytic activity">
    <reaction>
        <text>L-histidinol + 2 NAD(+) + H2O = L-histidine + 2 NADH + 3 H(+)</text>
        <dbReference type="Rhea" id="RHEA:20641"/>
        <dbReference type="ChEBI" id="CHEBI:15377"/>
        <dbReference type="ChEBI" id="CHEBI:15378"/>
        <dbReference type="ChEBI" id="CHEBI:57540"/>
        <dbReference type="ChEBI" id="CHEBI:57595"/>
        <dbReference type="ChEBI" id="CHEBI:57699"/>
        <dbReference type="ChEBI" id="CHEBI:57945"/>
        <dbReference type="EC" id="1.1.1.23"/>
    </reaction>
</comment>
<comment type="cofactor">
    <cofactor evidence="1">
        <name>Zn(2+)</name>
        <dbReference type="ChEBI" id="CHEBI:29105"/>
    </cofactor>
    <text evidence="1">Binds 1 zinc ion per subunit.</text>
</comment>
<comment type="pathway">
    <text>Amino-acid biosynthesis; L-histidine biosynthesis; L-histidine from 5-phospho-alpha-D-ribose 1-diphosphate: step 9/9.</text>
</comment>
<comment type="similarity">
    <text evidence="3">Belongs to the histidinol dehydrogenase family.</text>
</comment>
<comment type="sequence caution" evidence="2">
    <conflict type="erroneous initiation">
        <sequence resource="EMBL-CDS" id="SIU00229"/>
    </conflict>
    <text>Truncated N-terminus.</text>
</comment>
<feature type="chain" id="PRO_0000135795" description="Histidinol dehydrogenase">
    <location>
        <begin position="1"/>
        <end position="444"/>
    </location>
</feature>
<feature type="active site" description="Proton acceptor" evidence="1">
    <location>
        <position position="341"/>
    </location>
</feature>
<feature type="active site" description="Proton acceptor" evidence="1">
    <location>
        <position position="342"/>
    </location>
</feature>
<feature type="binding site" evidence="1">
    <location>
        <position position="135"/>
    </location>
    <ligand>
        <name>NAD(+)</name>
        <dbReference type="ChEBI" id="CHEBI:57540"/>
    </ligand>
</feature>
<feature type="binding site" evidence="1">
    <location>
        <position position="199"/>
    </location>
    <ligand>
        <name>NAD(+)</name>
        <dbReference type="ChEBI" id="CHEBI:57540"/>
    </ligand>
</feature>
<feature type="binding site" evidence="1">
    <location>
        <position position="227"/>
    </location>
    <ligand>
        <name>NAD(+)</name>
        <dbReference type="ChEBI" id="CHEBI:57540"/>
    </ligand>
</feature>
<feature type="binding site" evidence="1">
    <location>
        <position position="250"/>
    </location>
    <ligand>
        <name>substrate</name>
    </ligand>
</feature>
<feature type="binding site" evidence="1">
    <location>
        <position position="272"/>
    </location>
    <ligand>
        <name>substrate</name>
    </ligand>
</feature>
<feature type="binding site" evidence="1">
    <location>
        <position position="272"/>
    </location>
    <ligand>
        <name>Zn(2+)</name>
        <dbReference type="ChEBI" id="CHEBI:29105"/>
    </ligand>
</feature>
<feature type="binding site" evidence="1">
    <location>
        <position position="275"/>
    </location>
    <ligand>
        <name>substrate</name>
    </ligand>
</feature>
<feature type="binding site" evidence="1">
    <location>
        <position position="275"/>
    </location>
    <ligand>
        <name>Zn(2+)</name>
        <dbReference type="ChEBI" id="CHEBI:29105"/>
    </ligand>
</feature>
<feature type="binding site" evidence="1">
    <location>
        <position position="342"/>
    </location>
    <ligand>
        <name>substrate</name>
    </ligand>
</feature>
<feature type="binding site" evidence="1">
    <location>
        <position position="375"/>
    </location>
    <ligand>
        <name>substrate</name>
    </ligand>
</feature>
<feature type="binding site" evidence="1">
    <location>
        <position position="375"/>
    </location>
    <ligand>
        <name>Zn(2+)</name>
        <dbReference type="ChEBI" id="CHEBI:29105"/>
    </ligand>
</feature>
<feature type="binding site" evidence="1">
    <location>
        <position position="429"/>
    </location>
    <ligand>
        <name>substrate</name>
    </ligand>
</feature>
<feature type="binding site" evidence="1">
    <location>
        <position position="434"/>
    </location>
    <ligand>
        <name>substrate</name>
    </ligand>
</feature>
<feature type="binding site" evidence="1">
    <location>
        <position position="434"/>
    </location>
    <ligand>
        <name>Zn(2+)</name>
        <dbReference type="ChEBI" id="CHEBI:29105"/>
    </ligand>
</feature>
<sequence length="444" mass="45941">MTAPPPVLTRIDLRGAELTAAELRAALPRGGADVEAVLPTVRPIVAAVAERGAEAALDFGASFDGVRPHAIRVPDAALDAALAGLDCDVCEALQVMVERTRAVHSGQRRTDVTTTLGPGATVTERWVPVERVGLYVPGGNAVYPSSVVMNVVPAQAAGVDSLVVASPPQAQWDGMPHPTILAAARLLGVDEVWAVGGAQAVALLAYGGTDTDGAALTPVDMITGPGNIYVTAAKRLCRSRVGIDAEAGPTEIAILADHTADPVHVAADLISQAEHDELAASVLVTPSEDLADATDAELAGQLQTTVHRERVTAALTGRQSAIVLVDDVDAAVLVVNAYAAEHLEIQTADAPQVASRIRSAGAIFVGPWSPVSLGDYCAGSNHVLPTAGCARHSSGLSVQTFLRGIHVVEYTEAALKDVSGHVITLATAEDLPAHGEAVRRRFER</sequence>
<proteinExistence type="inferred from homology"/>
<name>HISX_MYCBO</name>
<organism>
    <name type="scientific">Mycobacterium bovis (strain ATCC BAA-935 / AF2122/97)</name>
    <dbReference type="NCBI Taxonomy" id="233413"/>
    <lineage>
        <taxon>Bacteria</taxon>
        <taxon>Bacillati</taxon>
        <taxon>Actinomycetota</taxon>
        <taxon>Actinomycetes</taxon>
        <taxon>Mycobacteriales</taxon>
        <taxon>Mycobacteriaceae</taxon>
        <taxon>Mycobacterium</taxon>
        <taxon>Mycobacterium tuberculosis complex</taxon>
    </lineage>
</organism>
<accession>P63951</accession>
<accession>A0A1R3XYS9</accession>
<accession>O08396</accession>
<accession>X2BIB0</accession>
<keyword id="KW-0028">Amino-acid biosynthesis</keyword>
<keyword id="KW-0368">Histidine biosynthesis</keyword>
<keyword id="KW-0479">Metal-binding</keyword>
<keyword id="KW-0520">NAD</keyword>
<keyword id="KW-0560">Oxidoreductase</keyword>
<keyword id="KW-1185">Reference proteome</keyword>
<keyword id="KW-0862">Zinc</keyword>
<gene>
    <name type="primary">hisD</name>
    <name type="ordered locus">BQ2027_MB1625</name>
</gene>
<reference key="1">
    <citation type="journal article" date="2003" name="Proc. Natl. Acad. Sci. U.S.A.">
        <title>The complete genome sequence of Mycobacterium bovis.</title>
        <authorList>
            <person name="Garnier T."/>
            <person name="Eiglmeier K."/>
            <person name="Camus J.-C."/>
            <person name="Medina N."/>
            <person name="Mansoor H."/>
            <person name="Pryor M."/>
            <person name="Duthoy S."/>
            <person name="Grondin S."/>
            <person name="Lacroix C."/>
            <person name="Monsempe C."/>
            <person name="Simon S."/>
            <person name="Harris B."/>
            <person name="Atkin R."/>
            <person name="Doggett J."/>
            <person name="Mayes R."/>
            <person name="Keating L."/>
            <person name="Wheeler P.R."/>
            <person name="Parkhill J."/>
            <person name="Barrell B.G."/>
            <person name="Cole S.T."/>
            <person name="Gordon S.V."/>
            <person name="Hewinson R.G."/>
        </authorList>
    </citation>
    <scope>NUCLEOTIDE SEQUENCE [LARGE SCALE GENOMIC DNA]</scope>
    <source>
        <strain>ATCC BAA-935 / AF2122/97</strain>
    </source>
</reference>
<reference key="2">
    <citation type="journal article" date="2017" name="Genome Announc.">
        <title>Updated reference genome sequence and annotation of Mycobacterium bovis AF2122/97.</title>
        <authorList>
            <person name="Malone K.M."/>
            <person name="Farrell D."/>
            <person name="Stuber T.P."/>
            <person name="Schubert O.T."/>
            <person name="Aebersold R."/>
            <person name="Robbe-Austerman S."/>
            <person name="Gordon S.V."/>
        </authorList>
    </citation>
    <scope>NUCLEOTIDE SEQUENCE [LARGE SCALE GENOMIC DNA]</scope>
    <scope>GENOME REANNOTATION</scope>
    <source>
        <strain>ATCC BAA-935 / AF2122/97</strain>
    </source>
</reference>
<dbReference type="EC" id="1.1.1.23"/>
<dbReference type="EMBL" id="LT708304">
    <property type="protein sequence ID" value="SIU00229.1"/>
    <property type="status" value="ALT_INIT"/>
    <property type="molecule type" value="Genomic_DNA"/>
</dbReference>
<dbReference type="RefSeq" id="NP_855278.1">
    <property type="nucleotide sequence ID" value="NC_002945.3"/>
</dbReference>
<dbReference type="SMR" id="P63951"/>
<dbReference type="KEGG" id="mbo:BQ2027_MB1625"/>
<dbReference type="PATRIC" id="fig|233413.5.peg.1774"/>
<dbReference type="UniPathway" id="UPA00031">
    <property type="reaction ID" value="UER00014"/>
</dbReference>
<dbReference type="Proteomes" id="UP000001419">
    <property type="component" value="Chromosome"/>
</dbReference>
<dbReference type="GO" id="GO:0005829">
    <property type="term" value="C:cytosol"/>
    <property type="evidence" value="ECO:0007669"/>
    <property type="project" value="TreeGrafter"/>
</dbReference>
<dbReference type="GO" id="GO:0004399">
    <property type="term" value="F:histidinol dehydrogenase activity"/>
    <property type="evidence" value="ECO:0007669"/>
    <property type="project" value="UniProtKB-UniRule"/>
</dbReference>
<dbReference type="GO" id="GO:0051287">
    <property type="term" value="F:NAD binding"/>
    <property type="evidence" value="ECO:0007669"/>
    <property type="project" value="InterPro"/>
</dbReference>
<dbReference type="GO" id="GO:0008270">
    <property type="term" value="F:zinc ion binding"/>
    <property type="evidence" value="ECO:0007669"/>
    <property type="project" value="UniProtKB-UniRule"/>
</dbReference>
<dbReference type="GO" id="GO:0000105">
    <property type="term" value="P:L-histidine biosynthetic process"/>
    <property type="evidence" value="ECO:0007669"/>
    <property type="project" value="UniProtKB-UniRule"/>
</dbReference>
<dbReference type="CDD" id="cd06572">
    <property type="entry name" value="Histidinol_dh"/>
    <property type="match status" value="1"/>
</dbReference>
<dbReference type="FunFam" id="3.40.50.1980:FF:000001">
    <property type="entry name" value="Histidinol dehydrogenase"/>
    <property type="match status" value="1"/>
</dbReference>
<dbReference type="Gene3D" id="1.20.5.1300">
    <property type="match status" value="1"/>
</dbReference>
<dbReference type="Gene3D" id="3.40.50.1980">
    <property type="entry name" value="Nitrogenase molybdenum iron protein domain"/>
    <property type="match status" value="2"/>
</dbReference>
<dbReference type="HAMAP" id="MF_01024">
    <property type="entry name" value="HisD"/>
    <property type="match status" value="1"/>
</dbReference>
<dbReference type="InterPro" id="IPR016161">
    <property type="entry name" value="Ald_DH/histidinol_DH"/>
</dbReference>
<dbReference type="InterPro" id="IPR001692">
    <property type="entry name" value="Histidinol_DH_CS"/>
</dbReference>
<dbReference type="InterPro" id="IPR022695">
    <property type="entry name" value="Histidinol_DH_monofunct"/>
</dbReference>
<dbReference type="InterPro" id="IPR012131">
    <property type="entry name" value="Hstdl_DH"/>
</dbReference>
<dbReference type="NCBIfam" id="TIGR00069">
    <property type="entry name" value="hisD"/>
    <property type="match status" value="1"/>
</dbReference>
<dbReference type="PANTHER" id="PTHR21256:SF2">
    <property type="entry name" value="HISTIDINE BIOSYNTHESIS TRIFUNCTIONAL PROTEIN"/>
    <property type="match status" value="1"/>
</dbReference>
<dbReference type="PANTHER" id="PTHR21256">
    <property type="entry name" value="HISTIDINOL DEHYDROGENASE HDH"/>
    <property type="match status" value="1"/>
</dbReference>
<dbReference type="Pfam" id="PF00815">
    <property type="entry name" value="Histidinol_dh"/>
    <property type="match status" value="1"/>
</dbReference>
<dbReference type="PIRSF" id="PIRSF000099">
    <property type="entry name" value="Histidinol_dh"/>
    <property type="match status" value="1"/>
</dbReference>
<dbReference type="PRINTS" id="PR00083">
    <property type="entry name" value="HOLDHDRGNASE"/>
</dbReference>
<dbReference type="SUPFAM" id="SSF53720">
    <property type="entry name" value="ALDH-like"/>
    <property type="match status" value="1"/>
</dbReference>
<dbReference type="PROSITE" id="PS00611">
    <property type="entry name" value="HISOL_DEHYDROGENASE"/>
    <property type="match status" value="1"/>
</dbReference>
<protein>
    <recommendedName>
        <fullName>Histidinol dehydrogenase</fullName>
        <shortName>HDH</shortName>
        <ecNumber>1.1.1.23</ecNumber>
    </recommendedName>
</protein>
<evidence type="ECO:0000250" key="1"/>
<evidence type="ECO:0000250" key="2">
    <source>
        <dbReference type="UniProtKB" id="P9WNW9"/>
    </source>
</evidence>
<evidence type="ECO:0000305" key="3"/>